<sequence>MLNITLPDGSVRQYESPVTVAQIAASIGAGLAKATVAGRVNGKLVDACDPIVEDSAVQIITPKDQEGIEIIRHSCAHLVGHAVKQLYPNAKMVIGPVIEEGFYYDIATEKPFTPEDVAAIEARMKELIAQDYDVVKIMTPRAEAIKIFQERGEEYKLRLIDDMPEVEAMGMYHHQEYVDMCRGPHVPNTRFLKNFKLTKLAGAYWRGDSNNEMLQRIYGTAWATKDELKAYIQRIEEAEKRDHRKLGKQLDLFHLQDEAPGMVFWHPKGWALWQVIEQHMRKELNAAGYKEVKTPQIMDKTFWEKSGHWDNYKDNMFVTSSEKREYAVKPMNCPGHVQIFNNGLRSYRDLPMRLAEFGSCHRNEPSGALHGLMRVRGFVQDDAHIFCTEDQIVSEARAFNELLIRIYKQFGFHDVSVKLSLRPEKRAGSDDVWDKAEQGLREALTACGVEWGELPGEGAFYGPKIEYHVRDALGRSWQCGTLQLDFVLPERLNAEYVTENNDRARPVMLHRAILGSLERFIGILIENHAGSFPLWLAPVQLVIMNITENQADYCREVAAKLQAAGFRAELDLRNEKIGYKIRDNSQYRFPYQIVVGDKEKQENKVAVRRKAEDLGSLDLDDFIAQLQQEITDALVNH</sequence>
<comment type="function">
    <text evidence="1">Catalyzes the attachment of threonine to tRNA(Thr) in a two-step reaction: L-threonine is first activated by ATP to form Thr-AMP and then transferred to the acceptor end of tRNA(Thr). Also edits incorrectly charged L-seryl-tRNA(Thr).</text>
</comment>
<comment type="catalytic activity">
    <reaction evidence="1">
        <text>tRNA(Thr) + L-threonine + ATP = L-threonyl-tRNA(Thr) + AMP + diphosphate + H(+)</text>
        <dbReference type="Rhea" id="RHEA:24624"/>
        <dbReference type="Rhea" id="RHEA-COMP:9670"/>
        <dbReference type="Rhea" id="RHEA-COMP:9704"/>
        <dbReference type="ChEBI" id="CHEBI:15378"/>
        <dbReference type="ChEBI" id="CHEBI:30616"/>
        <dbReference type="ChEBI" id="CHEBI:33019"/>
        <dbReference type="ChEBI" id="CHEBI:57926"/>
        <dbReference type="ChEBI" id="CHEBI:78442"/>
        <dbReference type="ChEBI" id="CHEBI:78534"/>
        <dbReference type="ChEBI" id="CHEBI:456215"/>
        <dbReference type="EC" id="6.1.1.3"/>
    </reaction>
</comment>
<comment type="cofactor">
    <cofactor evidence="1">
        <name>Zn(2+)</name>
        <dbReference type="ChEBI" id="CHEBI:29105"/>
    </cofactor>
    <text evidence="1">Binds 1 zinc ion per subunit.</text>
</comment>
<comment type="subunit">
    <text evidence="1">Homodimer.</text>
</comment>
<comment type="subcellular location">
    <subcellularLocation>
        <location evidence="1">Cytoplasm</location>
    </subcellularLocation>
</comment>
<comment type="similarity">
    <text evidence="1">Belongs to the class-II aminoacyl-tRNA synthetase family.</text>
</comment>
<protein>
    <recommendedName>
        <fullName evidence="1">Threonine--tRNA ligase</fullName>
        <ecNumber evidence="1">6.1.1.3</ecNumber>
    </recommendedName>
    <alternativeName>
        <fullName evidence="1">Threonyl-tRNA synthetase</fullName>
        <shortName evidence="1">ThrRS</shortName>
    </alternativeName>
</protein>
<reference key="1">
    <citation type="journal article" date="2000" name="Science">
        <title>Complete genome sequence of Neisseria meningitidis serogroup B strain MC58.</title>
        <authorList>
            <person name="Tettelin H."/>
            <person name="Saunders N.J."/>
            <person name="Heidelberg J.F."/>
            <person name="Jeffries A.C."/>
            <person name="Nelson K.E."/>
            <person name="Eisen J.A."/>
            <person name="Ketchum K.A."/>
            <person name="Hood D.W."/>
            <person name="Peden J.F."/>
            <person name="Dodson R.J."/>
            <person name="Nelson W.C."/>
            <person name="Gwinn M.L."/>
            <person name="DeBoy R.T."/>
            <person name="Peterson J.D."/>
            <person name="Hickey E.K."/>
            <person name="Haft D.H."/>
            <person name="Salzberg S.L."/>
            <person name="White O."/>
            <person name="Fleischmann R.D."/>
            <person name="Dougherty B.A."/>
            <person name="Mason T.M."/>
            <person name="Ciecko A."/>
            <person name="Parksey D.S."/>
            <person name="Blair E."/>
            <person name="Cittone H."/>
            <person name="Clark E.B."/>
            <person name="Cotton M.D."/>
            <person name="Utterback T.R."/>
            <person name="Khouri H.M."/>
            <person name="Qin H."/>
            <person name="Vamathevan J.J."/>
            <person name="Gill J."/>
            <person name="Scarlato V."/>
            <person name="Masignani V."/>
            <person name="Pizza M."/>
            <person name="Grandi G."/>
            <person name="Sun L."/>
            <person name="Smith H.O."/>
            <person name="Fraser C.M."/>
            <person name="Moxon E.R."/>
            <person name="Rappuoli R."/>
            <person name="Venter J.C."/>
        </authorList>
    </citation>
    <scope>NUCLEOTIDE SEQUENCE [LARGE SCALE GENOMIC DNA]</scope>
    <source>
        <strain>ATCC BAA-335 / MC58</strain>
    </source>
</reference>
<evidence type="ECO:0000255" key="1">
    <source>
        <dbReference type="HAMAP-Rule" id="MF_00184"/>
    </source>
</evidence>
<evidence type="ECO:0000255" key="2">
    <source>
        <dbReference type="PROSITE-ProRule" id="PRU01228"/>
    </source>
</evidence>
<proteinExistence type="inferred from homology"/>
<keyword id="KW-0030">Aminoacyl-tRNA synthetase</keyword>
<keyword id="KW-0067">ATP-binding</keyword>
<keyword id="KW-0963">Cytoplasm</keyword>
<keyword id="KW-0436">Ligase</keyword>
<keyword id="KW-0479">Metal-binding</keyword>
<keyword id="KW-0547">Nucleotide-binding</keyword>
<keyword id="KW-0648">Protein biosynthesis</keyword>
<keyword id="KW-1185">Reference proteome</keyword>
<keyword id="KW-0694">RNA-binding</keyword>
<keyword id="KW-0820">tRNA-binding</keyword>
<keyword id="KW-0862">Zinc</keyword>
<organism>
    <name type="scientific">Neisseria meningitidis serogroup B (strain ATCC BAA-335 / MC58)</name>
    <dbReference type="NCBI Taxonomy" id="122586"/>
    <lineage>
        <taxon>Bacteria</taxon>
        <taxon>Pseudomonadati</taxon>
        <taxon>Pseudomonadota</taxon>
        <taxon>Betaproteobacteria</taxon>
        <taxon>Neisseriales</taxon>
        <taxon>Neisseriaceae</taxon>
        <taxon>Neisseria</taxon>
    </lineage>
</organism>
<feature type="chain" id="PRO_0000101016" description="Threonine--tRNA ligase">
    <location>
        <begin position="1"/>
        <end position="637"/>
    </location>
</feature>
<feature type="domain" description="TGS" evidence="2">
    <location>
        <begin position="1"/>
        <end position="61"/>
    </location>
</feature>
<feature type="region of interest" description="Catalytic" evidence="1">
    <location>
        <begin position="242"/>
        <end position="533"/>
    </location>
</feature>
<feature type="binding site" evidence="1">
    <location>
        <position position="333"/>
    </location>
    <ligand>
        <name>Zn(2+)</name>
        <dbReference type="ChEBI" id="CHEBI:29105"/>
    </ligand>
</feature>
<feature type="binding site" evidence="1">
    <location>
        <position position="384"/>
    </location>
    <ligand>
        <name>Zn(2+)</name>
        <dbReference type="ChEBI" id="CHEBI:29105"/>
    </ligand>
</feature>
<feature type="binding site" evidence="1">
    <location>
        <position position="510"/>
    </location>
    <ligand>
        <name>Zn(2+)</name>
        <dbReference type="ChEBI" id="CHEBI:29105"/>
    </ligand>
</feature>
<gene>
    <name evidence="1" type="primary">thrS</name>
    <name type="ordered locus">NMB0720</name>
</gene>
<accession>Q9K095</accession>
<dbReference type="EC" id="6.1.1.3" evidence="1"/>
<dbReference type="EMBL" id="AE002098">
    <property type="protein sequence ID" value="AAF41133.1"/>
    <property type="molecule type" value="Genomic_DNA"/>
</dbReference>
<dbReference type="PIR" id="E81167">
    <property type="entry name" value="E81167"/>
</dbReference>
<dbReference type="RefSeq" id="NP_273762.1">
    <property type="nucleotide sequence ID" value="NC_003112.2"/>
</dbReference>
<dbReference type="RefSeq" id="WP_002225463.1">
    <property type="nucleotide sequence ID" value="NC_003112.2"/>
</dbReference>
<dbReference type="SMR" id="Q9K095"/>
<dbReference type="FunCoup" id="Q9K095">
    <property type="interactions" value="532"/>
</dbReference>
<dbReference type="STRING" id="122586.NMB0720"/>
<dbReference type="PaxDb" id="122586-NMB0720"/>
<dbReference type="KEGG" id="nme:NMB0720"/>
<dbReference type="PATRIC" id="fig|122586.8.peg.918"/>
<dbReference type="HOGENOM" id="CLU_008554_0_1_4"/>
<dbReference type="InParanoid" id="Q9K095"/>
<dbReference type="OrthoDB" id="9802304at2"/>
<dbReference type="Proteomes" id="UP000000425">
    <property type="component" value="Chromosome"/>
</dbReference>
<dbReference type="GO" id="GO:0005829">
    <property type="term" value="C:cytosol"/>
    <property type="evidence" value="ECO:0000318"/>
    <property type="project" value="GO_Central"/>
</dbReference>
<dbReference type="GO" id="GO:0005524">
    <property type="term" value="F:ATP binding"/>
    <property type="evidence" value="ECO:0007669"/>
    <property type="project" value="UniProtKB-UniRule"/>
</dbReference>
<dbReference type="GO" id="GO:0046872">
    <property type="term" value="F:metal ion binding"/>
    <property type="evidence" value="ECO:0007669"/>
    <property type="project" value="UniProtKB-KW"/>
</dbReference>
<dbReference type="GO" id="GO:0004829">
    <property type="term" value="F:threonine-tRNA ligase activity"/>
    <property type="evidence" value="ECO:0000318"/>
    <property type="project" value="GO_Central"/>
</dbReference>
<dbReference type="GO" id="GO:0000049">
    <property type="term" value="F:tRNA binding"/>
    <property type="evidence" value="ECO:0007669"/>
    <property type="project" value="UniProtKB-KW"/>
</dbReference>
<dbReference type="GO" id="GO:0006435">
    <property type="term" value="P:threonyl-tRNA aminoacylation"/>
    <property type="evidence" value="ECO:0000318"/>
    <property type="project" value="GO_Central"/>
</dbReference>
<dbReference type="CDD" id="cd01667">
    <property type="entry name" value="TGS_ThrRS"/>
    <property type="match status" value="1"/>
</dbReference>
<dbReference type="CDD" id="cd00860">
    <property type="entry name" value="ThrRS_anticodon"/>
    <property type="match status" value="1"/>
</dbReference>
<dbReference type="CDD" id="cd00771">
    <property type="entry name" value="ThrRS_core"/>
    <property type="match status" value="1"/>
</dbReference>
<dbReference type="FunFam" id="3.10.20.30:FF:000005">
    <property type="entry name" value="Threonine--tRNA ligase"/>
    <property type="match status" value="1"/>
</dbReference>
<dbReference type="FunFam" id="3.30.54.20:FF:000002">
    <property type="entry name" value="Threonine--tRNA ligase"/>
    <property type="match status" value="1"/>
</dbReference>
<dbReference type="FunFam" id="3.30.930.10:FF:000002">
    <property type="entry name" value="Threonine--tRNA ligase"/>
    <property type="match status" value="1"/>
</dbReference>
<dbReference type="FunFam" id="3.40.50.800:FF:000001">
    <property type="entry name" value="Threonine--tRNA ligase"/>
    <property type="match status" value="1"/>
</dbReference>
<dbReference type="FunFam" id="3.30.980.10:FF:000005">
    <property type="entry name" value="Threonyl-tRNA synthetase, mitochondrial"/>
    <property type="match status" value="1"/>
</dbReference>
<dbReference type="Gene3D" id="3.10.20.30">
    <property type="match status" value="1"/>
</dbReference>
<dbReference type="Gene3D" id="3.30.54.20">
    <property type="match status" value="1"/>
</dbReference>
<dbReference type="Gene3D" id="3.40.50.800">
    <property type="entry name" value="Anticodon-binding domain"/>
    <property type="match status" value="1"/>
</dbReference>
<dbReference type="Gene3D" id="3.30.930.10">
    <property type="entry name" value="Bira Bifunctional Protein, Domain 2"/>
    <property type="match status" value="1"/>
</dbReference>
<dbReference type="Gene3D" id="3.30.980.10">
    <property type="entry name" value="Threonyl-trna Synthetase, Chain A, domain 2"/>
    <property type="match status" value="1"/>
</dbReference>
<dbReference type="HAMAP" id="MF_00184">
    <property type="entry name" value="Thr_tRNA_synth"/>
    <property type="match status" value="1"/>
</dbReference>
<dbReference type="InterPro" id="IPR002314">
    <property type="entry name" value="aa-tRNA-synt_IIb"/>
</dbReference>
<dbReference type="InterPro" id="IPR006195">
    <property type="entry name" value="aa-tRNA-synth_II"/>
</dbReference>
<dbReference type="InterPro" id="IPR045864">
    <property type="entry name" value="aa-tRNA-synth_II/BPL/LPL"/>
</dbReference>
<dbReference type="InterPro" id="IPR004154">
    <property type="entry name" value="Anticodon-bd"/>
</dbReference>
<dbReference type="InterPro" id="IPR036621">
    <property type="entry name" value="Anticodon-bd_dom_sf"/>
</dbReference>
<dbReference type="InterPro" id="IPR012675">
    <property type="entry name" value="Beta-grasp_dom_sf"/>
</dbReference>
<dbReference type="InterPro" id="IPR004095">
    <property type="entry name" value="TGS"/>
</dbReference>
<dbReference type="InterPro" id="IPR012676">
    <property type="entry name" value="TGS-like"/>
</dbReference>
<dbReference type="InterPro" id="IPR002320">
    <property type="entry name" value="Thr-tRNA-ligase_IIa"/>
</dbReference>
<dbReference type="InterPro" id="IPR018163">
    <property type="entry name" value="Thr/Ala-tRNA-synth_IIc_edit"/>
</dbReference>
<dbReference type="InterPro" id="IPR047246">
    <property type="entry name" value="ThrRS_anticodon"/>
</dbReference>
<dbReference type="InterPro" id="IPR033728">
    <property type="entry name" value="ThrRS_core"/>
</dbReference>
<dbReference type="InterPro" id="IPR012947">
    <property type="entry name" value="tRNA_SAD"/>
</dbReference>
<dbReference type="NCBIfam" id="TIGR00418">
    <property type="entry name" value="thrS"/>
    <property type="match status" value="1"/>
</dbReference>
<dbReference type="PANTHER" id="PTHR11451:SF44">
    <property type="entry name" value="THREONINE--TRNA LIGASE, CHLOROPLASTIC_MITOCHONDRIAL 2"/>
    <property type="match status" value="1"/>
</dbReference>
<dbReference type="PANTHER" id="PTHR11451">
    <property type="entry name" value="THREONINE-TRNA LIGASE"/>
    <property type="match status" value="1"/>
</dbReference>
<dbReference type="Pfam" id="PF03129">
    <property type="entry name" value="HGTP_anticodon"/>
    <property type="match status" value="1"/>
</dbReference>
<dbReference type="Pfam" id="PF02824">
    <property type="entry name" value="TGS"/>
    <property type="match status" value="1"/>
</dbReference>
<dbReference type="Pfam" id="PF00587">
    <property type="entry name" value="tRNA-synt_2b"/>
    <property type="match status" value="1"/>
</dbReference>
<dbReference type="Pfam" id="PF07973">
    <property type="entry name" value="tRNA_SAD"/>
    <property type="match status" value="1"/>
</dbReference>
<dbReference type="PRINTS" id="PR01047">
    <property type="entry name" value="TRNASYNTHTHR"/>
</dbReference>
<dbReference type="SMART" id="SM00863">
    <property type="entry name" value="tRNA_SAD"/>
    <property type="match status" value="1"/>
</dbReference>
<dbReference type="SUPFAM" id="SSF52954">
    <property type="entry name" value="Class II aaRS ABD-related"/>
    <property type="match status" value="1"/>
</dbReference>
<dbReference type="SUPFAM" id="SSF55681">
    <property type="entry name" value="Class II aaRS and biotin synthetases"/>
    <property type="match status" value="1"/>
</dbReference>
<dbReference type="SUPFAM" id="SSF81271">
    <property type="entry name" value="TGS-like"/>
    <property type="match status" value="1"/>
</dbReference>
<dbReference type="SUPFAM" id="SSF55186">
    <property type="entry name" value="ThrRS/AlaRS common domain"/>
    <property type="match status" value="1"/>
</dbReference>
<dbReference type="PROSITE" id="PS50862">
    <property type="entry name" value="AA_TRNA_LIGASE_II"/>
    <property type="match status" value="1"/>
</dbReference>
<dbReference type="PROSITE" id="PS51880">
    <property type="entry name" value="TGS"/>
    <property type="match status" value="1"/>
</dbReference>
<name>SYT_NEIMB</name>